<keyword id="KW-0028">Amino-acid biosynthesis</keyword>
<keyword id="KW-0963">Cytoplasm</keyword>
<keyword id="KW-0220">Diaminopimelate biosynthesis</keyword>
<keyword id="KW-0456">Lyase</keyword>
<keyword id="KW-0457">Lysine biosynthesis</keyword>
<keyword id="KW-1185">Reference proteome</keyword>
<keyword id="KW-0704">Schiff base</keyword>
<evidence type="ECO:0000255" key="1">
    <source>
        <dbReference type="HAMAP-Rule" id="MF_00418"/>
    </source>
</evidence>
<evidence type="ECO:0000305" key="2"/>
<name>DAPA_BUCAI</name>
<gene>
    <name evidence="1" type="primary">dapA</name>
    <name type="ordered locus">BU096</name>
</gene>
<proteinExistence type="inferred from homology"/>
<dbReference type="EC" id="4.3.3.7" evidence="1"/>
<dbReference type="EMBL" id="BA000003">
    <property type="protein sequence ID" value="BAB12815.1"/>
    <property type="molecule type" value="Genomic_DNA"/>
</dbReference>
<dbReference type="RefSeq" id="NP_239929.1">
    <property type="nucleotide sequence ID" value="NC_002528.1"/>
</dbReference>
<dbReference type="RefSeq" id="WP_010895943.1">
    <property type="nucleotide sequence ID" value="NZ_AP036055.1"/>
</dbReference>
<dbReference type="SMR" id="P57197"/>
<dbReference type="STRING" id="563178.BUAP5A_094"/>
<dbReference type="EnsemblBacteria" id="BAB12815">
    <property type="protein sequence ID" value="BAB12815"/>
    <property type="gene ID" value="BAB12815"/>
</dbReference>
<dbReference type="KEGG" id="buc:BU096"/>
<dbReference type="PATRIC" id="fig|107806.10.peg.104"/>
<dbReference type="eggNOG" id="COG0329">
    <property type="taxonomic scope" value="Bacteria"/>
</dbReference>
<dbReference type="HOGENOM" id="CLU_049343_7_1_6"/>
<dbReference type="UniPathway" id="UPA00034">
    <property type="reaction ID" value="UER00017"/>
</dbReference>
<dbReference type="Proteomes" id="UP000001806">
    <property type="component" value="Chromosome"/>
</dbReference>
<dbReference type="GO" id="GO:0005829">
    <property type="term" value="C:cytosol"/>
    <property type="evidence" value="ECO:0007669"/>
    <property type="project" value="TreeGrafter"/>
</dbReference>
<dbReference type="GO" id="GO:0008840">
    <property type="term" value="F:4-hydroxy-tetrahydrodipicolinate synthase activity"/>
    <property type="evidence" value="ECO:0007669"/>
    <property type="project" value="UniProtKB-UniRule"/>
</dbReference>
<dbReference type="GO" id="GO:0019877">
    <property type="term" value="P:diaminopimelate biosynthetic process"/>
    <property type="evidence" value="ECO:0007669"/>
    <property type="project" value="UniProtKB-UniRule"/>
</dbReference>
<dbReference type="GO" id="GO:0009089">
    <property type="term" value="P:lysine biosynthetic process via diaminopimelate"/>
    <property type="evidence" value="ECO:0007669"/>
    <property type="project" value="UniProtKB-UniRule"/>
</dbReference>
<dbReference type="CDD" id="cd00950">
    <property type="entry name" value="DHDPS"/>
    <property type="match status" value="1"/>
</dbReference>
<dbReference type="FunFam" id="3.20.20.70:FF:000046">
    <property type="entry name" value="4-hydroxy-tetrahydrodipicolinate synthase"/>
    <property type="match status" value="1"/>
</dbReference>
<dbReference type="Gene3D" id="3.20.20.70">
    <property type="entry name" value="Aldolase class I"/>
    <property type="match status" value="1"/>
</dbReference>
<dbReference type="HAMAP" id="MF_00418">
    <property type="entry name" value="DapA"/>
    <property type="match status" value="1"/>
</dbReference>
<dbReference type="InterPro" id="IPR013785">
    <property type="entry name" value="Aldolase_TIM"/>
</dbReference>
<dbReference type="InterPro" id="IPR005263">
    <property type="entry name" value="DapA"/>
</dbReference>
<dbReference type="InterPro" id="IPR002220">
    <property type="entry name" value="DapA-like"/>
</dbReference>
<dbReference type="InterPro" id="IPR020625">
    <property type="entry name" value="Schiff_base-form_aldolases_AS"/>
</dbReference>
<dbReference type="InterPro" id="IPR020624">
    <property type="entry name" value="Schiff_base-form_aldolases_CS"/>
</dbReference>
<dbReference type="NCBIfam" id="TIGR00674">
    <property type="entry name" value="dapA"/>
    <property type="match status" value="1"/>
</dbReference>
<dbReference type="PANTHER" id="PTHR12128:SF66">
    <property type="entry name" value="4-HYDROXY-2-OXOGLUTARATE ALDOLASE, MITOCHONDRIAL"/>
    <property type="match status" value="1"/>
</dbReference>
<dbReference type="PANTHER" id="PTHR12128">
    <property type="entry name" value="DIHYDRODIPICOLINATE SYNTHASE"/>
    <property type="match status" value="1"/>
</dbReference>
<dbReference type="Pfam" id="PF00701">
    <property type="entry name" value="DHDPS"/>
    <property type="match status" value="1"/>
</dbReference>
<dbReference type="PIRSF" id="PIRSF001365">
    <property type="entry name" value="DHDPS"/>
    <property type="match status" value="1"/>
</dbReference>
<dbReference type="PRINTS" id="PR00146">
    <property type="entry name" value="DHPICSNTHASE"/>
</dbReference>
<dbReference type="SMART" id="SM01130">
    <property type="entry name" value="DHDPS"/>
    <property type="match status" value="1"/>
</dbReference>
<dbReference type="SUPFAM" id="SSF51569">
    <property type="entry name" value="Aldolase"/>
    <property type="match status" value="1"/>
</dbReference>
<dbReference type="PROSITE" id="PS00665">
    <property type="entry name" value="DHDPS_1"/>
    <property type="match status" value="1"/>
</dbReference>
<dbReference type="PROSITE" id="PS00666">
    <property type="entry name" value="DHDPS_2"/>
    <property type="match status" value="1"/>
</dbReference>
<accession>P57197</accession>
<protein>
    <recommendedName>
        <fullName evidence="1">4-hydroxy-tetrahydrodipicolinate synthase</fullName>
        <shortName evidence="1">HTPA synthase</shortName>
        <ecNumber evidence="1">4.3.3.7</ecNumber>
    </recommendedName>
</protein>
<sequence length="294" mass="32245">MFKGSIVALITPMDEKGQICRISLEKLINYHVASKTEAIVSIGTTGESATLSQEEHINIVMLTLELADGRIPVIAGTGANATTEAISLTKRFEKSGVAGCLSVTPYYNRPTQEGLYQHFKAISENTELPQILYNVPSRTGCDLLPETVAKLSHFNNIIGIKEATGDLSRIHKIKELVKTNFLLISGDDATALDFMQLGGQGVISVTANIAAKEMMEICSYALKGDFINARSINKRLMLLHEALFIEPNPIPVKWLAKKIGLIKSDTLRLPMTPVLDSTRFQLEKAIQYANLKIS</sequence>
<organism>
    <name type="scientific">Buchnera aphidicola subsp. Acyrthosiphon pisum (strain APS)</name>
    <name type="common">Acyrthosiphon pisum symbiotic bacterium</name>
    <dbReference type="NCBI Taxonomy" id="107806"/>
    <lineage>
        <taxon>Bacteria</taxon>
        <taxon>Pseudomonadati</taxon>
        <taxon>Pseudomonadota</taxon>
        <taxon>Gammaproteobacteria</taxon>
        <taxon>Enterobacterales</taxon>
        <taxon>Erwiniaceae</taxon>
        <taxon>Buchnera</taxon>
    </lineage>
</organism>
<comment type="function">
    <text evidence="1">Catalyzes the condensation of (S)-aspartate-beta-semialdehyde [(S)-ASA] and pyruvate to 4-hydroxy-tetrahydrodipicolinate (HTPA).</text>
</comment>
<comment type="catalytic activity">
    <reaction evidence="1">
        <text>L-aspartate 4-semialdehyde + pyruvate = (2S,4S)-4-hydroxy-2,3,4,5-tetrahydrodipicolinate + H2O + H(+)</text>
        <dbReference type="Rhea" id="RHEA:34171"/>
        <dbReference type="ChEBI" id="CHEBI:15361"/>
        <dbReference type="ChEBI" id="CHEBI:15377"/>
        <dbReference type="ChEBI" id="CHEBI:15378"/>
        <dbReference type="ChEBI" id="CHEBI:67139"/>
        <dbReference type="ChEBI" id="CHEBI:537519"/>
        <dbReference type="EC" id="4.3.3.7"/>
    </reaction>
</comment>
<comment type="pathway">
    <text evidence="1">Amino-acid biosynthesis; L-lysine biosynthesis via DAP pathway; (S)-tetrahydrodipicolinate from L-aspartate: step 3/4.</text>
</comment>
<comment type="subunit">
    <text evidence="1">Homotetramer; dimer of dimers.</text>
</comment>
<comment type="subcellular location">
    <subcellularLocation>
        <location evidence="1">Cytoplasm</location>
    </subcellularLocation>
</comment>
<comment type="similarity">
    <text evidence="1">Belongs to the DapA family.</text>
</comment>
<comment type="caution">
    <text evidence="2">Was originally thought to be a dihydrodipicolinate synthase (DHDPS), catalyzing the condensation of (S)-aspartate-beta-semialdehyde [(S)-ASA] and pyruvate to dihydrodipicolinate (DHDP). However, it was shown in E.coli that the product of the enzymatic reaction is not dihydrodipicolinate but in fact (4S)-4-hydroxy-2,3,4,5-tetrahydro-(2S)-dipicolinic acid (HTPA), and that the consecutive dehydration reaction leading to DHDP is not spontaneous but catalyzed by DapB.</text>
</comment>
<reference key="1">
    <citation type="journal article" date="2000" name="Nature">
        <title>Genome sequence of the endocellular bacterial symbiont of aphids Buchnera sp. APS.</title>
        <authorList>
            <person name="Shigenobu S."/>
            <person name="Watanabe H."/>
            <person name="Hattori M."/>
            <person name="Sakaki Y."/>
            <person name="Ishikawa H."/>
        </authorList>
    </citation>
    <scope>NUCLEOTIDE SEQUENCE [LARGE SCALE GENOMIC DNA]</scope>
    <source>
        <strain>APS</strain>
    </source>
</reference>
<feature type="chain" id="PRO_0000103090" description="4-hydroxy-tetrahydrodipicolinate synthase">
    <location>
        <begin position="1"/>
        <end position="294"/>
    </location>
</feature>
<feature type="active site" description="Proton donor/acceptor" evidence="1">
    <location>
        <position position="133"/>
    </location>
</feature>
<feature type="active site" description="Schiff-base intermediate with substrate" evidence="1">
    <location>
        <position position="161"/>
    </location>
</feature>
<feature type="binding site" evidence="1">
    <location>
        <position position="45"/>
    </location>
    <ligand>
        <name>pyruvate</name>
        <dbReference type="ChEBI" id="CHEBI:15361"/>
    </ligand>
</feature>
<feature type="binding site" evidence="1">
    <location>
        <position position="203"/>
    </location>
    <ligand>
        <name>pyruvate</name>
        <dbReference type="ChEBI" id="CHEBI:15361"/>
    </ligand>
</feature>
<feature type="site" description="Part of a proton relay during catalysis" evidence="1">
    <location>
        <position position="44"/>
    </location>
</feature>
<feature type="site" description="Part of a proton relay during catalysis" evidence="1">
    <location>
        <position position="107"/>
    </location>
</feature>